<organism>
    <name type="scientific">Synechocystis sp. (strain ATCC 27184 / PCC 6803 / Kazusa)</name>
    <dbReference type="NCBI Taxonomy" id="1111708"/>
    <lineage>
        <taxon>Bacteria</taxon>
        <taxon>Bacillati</taxon>
        <taxon>Cyanobacteriota</taxon>
        <taxon>Cyanophyceae</taxon>
        <taxon>Synechococcales</taxon>
        <taxon>Merismopediaceae</taxon>
        <taxon>Synechocystis</taxon>
    </lineage>
</organism>
<comment type="function">
    <text evidence="4 5">Desaturase involved in fatty acid biosynthesis (PubMed:8389613, PubMed:8978669). Introduces a double bond at carbon 6 of linoleoyl group (18:2) attached to the sn-1 position of the glycerol moiety of membrane glycerolipids, leading to the formation of gamma-linolenic acid (GLA) (PubMed:8389613, PubMed:8978669).</text>
</comment>
<comment type="catalytic activity">
    <reaction evidence="5 9">
        <text>a 1-[(9Z,12Z)-octadecdienoyl]-2-acyl-glycerolipid + 2 reduced [2Fe-2S]-[ferredoxin] + O2 + 2 H(+) = a 1-[(6Z,9Z,12Z)-octadectrienoyl]-2-acyl-glycerolipid + 2 oxidized [2Fe-2S]-[ferredoxin] + 2 H2O</text>
        <dbReference type="Rhea" id="RHEA:46780"/>
        <dbReference type="Rhea" id="RHEA-COMP:10000"/>
        <dbReference type="Rhea" id="RHEA-COMP:10001"/>
        <dbReference type="ChEBI" id="CHEBI:15377"/>
        <dbReference type="ChEBI" id="CHEBI:15378"/>
        <dbReference type="ChEBI" id="CHEBI:15379"/>
        <dbReference type="ChEBI" id="CHEBI:33737"/>
        <dbReference type="ChEBI" id="CHEBI:33738"/>
        <dbReference type="ChEBI" id="CHEBI:87010"/>
        <dbReference type="ChEBI" id="CHEBI:87017"/>
        <dbReference type="EC" id="1.14.19.46"/>
    </reaction>
    <physiologicalReaction direction="left-to-right" evidence="5 9">
        <dbReference type="Rhea" id="RHEA:46781"/>
    </physiologicalReaction>
</comment>
<comment type="cofactor">
    <cofactor evidence="1">
        <name>Fe(2+)</name>
        <dbReference type="ChEBI" id="CHEBI:29033"/>
    </cofactor>
</comment>
<comment type="pathway">
    <text evidence="4 5">Lipid metabolism; polyunsaturated fatty acid biosynthesis.</text>
</comment>
<comment type="subcellular location">
    <subcellularLocation>
        <location evidence="3">Membrane</location>
        <topology evidence="3">Multi-pass membrane protein</topology>
    </subcellularLocation>
</comment>
<comment type="domain">
    <text evidence="1">The histidine box domains are involved in binding the catalytic metal ions.</text>
</comment>
<comment type="disruption phenotype">
    <text evidence="5">The disruption mutant does not contain any fatty acids with a double bond at the carbon 6 position (PubMed:8978669). Disruption does not affect growth of cells (PubMed:8978669). The growth rate of the desA-desD double mutant, which lacks polyunsaturated molecular species of membrane lipids, is dramatically lower at 20 and 25 degrees Celsius than that of the wild-type strain (PubMed:8978669). This double mutation does not significantly alter the polypeptide composition or ratio of lipid to protein in thylakoid membranes, but it decreases the tolerance of the cells to photoinhibition of photosynthesis at low temperature by suppressing recovery of the photosystem II protein complex from photoinhibitory damage (PubMed:8978669).</text>
</comment>
<comment type="similarity">
    <text evidence="8">Belongs to the fatty acid desaturase type 2 family.</text>
</comment>
<accession>Q08871</accession>
<feature type="chain" id="PRO_0000185432" description="sn-1 linoleoyl-lipid 6-desaturase">
    <location>
        <begin position="1"/>
        <end position="359"/>
    </location>
</feature>
<feature type="transmembrane region" description="Helical" evidence="3">
    <location>
        <begin position="45"/>
        <end position="65"/>
    </location>
</feature>
<feature type="transmembrane region" description="Helical" evidence="3">
    <location>
        <begin position="69"/>
        <end position="89"/>
    </location>
</feature>
<feature type="transmembrane region" description="Helical" evidence="3">
    <location>
        <begin position="165"/>
        <end position="185"/>
    </location>
</feature>
<feature type="transmembrane region" description="Helical" evidence="3">
    <location>
        <begin position="206"/>
        <end position="226"/>
    </location>
</feature>
<feature type="transmembrane region" description="Helical" evidence="3">
    <location>
        <begin position="231"/>
        <end position="251"/>
    </location>
</feature>
<feature type="short sequence motif" description="Histidine box-1" evidence="2">
    <location>
        <begin position="88"/>
        <end position="92"/>
    </location>
</feature>
<feature type="short sequence motif" description="Histidine box-2" evidence="2">
    <location>
        <begin position="123"/>
        <end position="128"/>
    </location>
</feature>
<feature type="short sequence motif" description="Histidine box-3" evidence="2">
    <location>
        <begin position="306"/>
        <end position="310"/>
    </location>
</feature>
<feature type="site" description="Important for the regioselectivity of the enzyme" evidence="2">
    <location>
        <position position="314"/>
    </location>
</feature>
<gene>
    <name evidence="7" type="primary">desD</name>
    <name type="synonym">des6</name>
    <name type="ordered locus">sll0262</name>
</gene>
<protein>
    <recommendedName>
        <fullName evidence="8">sn-1 linoleoyl-lipid 6-desaturase</fullName>
        <ecNumber evidence="5 9">1.14.19.46</ecNumber>
    </recommendedName>
    <alternativeName>
        <fullName evidence="8">Delta(6)-desaturase</fullName>
    </alternativeName>
    <alternativeName>
        <fullName evidence="7">Delta-6 acyl-lipid desaturase</fullName>
    </alternativeName>
    <alternativeName>
        <fullName evidence="6">Delta-6 desaturase</fullName>
    </alternativeName>
    <alternativeName>
        <fullName>Linoleoyl-CoA desaturase</fullName>
    </alternativeName>
</protein>
<evidence type="ECO:0000250" key="1">
    <source>
        <dbReference type="UniProtKB" id="O00767"/>
    </source>
</evidence>
<evidence type="ECO:0000250" key="2">
    <source>
        <dbReference type="UniProtKB" id="Q54795"/>
    </source>
</evidence>
<evidence type="ECO:0000255" key="3"/>
<evidence type="ECO:0000269" key="4">
    <source>
    </source>
</evidence>
<evidence type="ECO:0000269" key="5">
    <source>
    </source>
</evidence>
<evidence type="ECO:0000303" key="6">
    <source>
    </source>
</evidence>
<evidence type="ECO:0000303" key="7">
    <source>
    </source>
</evidence>
<evidence type="ECO:0000305" key="8"/>
<evidence type="ECO:0000305" key="9">
    <source>
    </source>
</evidence>
<proteinExistence type="evidence at protein level"/>
<keyword id="KW-0275">Fatty acid biosynthesis</keyword>
<keyword id="KW-0276">Fatty acid metabolism</keyword>
<keyword id="KW-0408">Iron</keyword>
<keyword id="KW-0444">Lipid biosynthesis</keyword>
<keyword id="KW-0443">Lipid metabolism</keyword>
<keyword id="KW-0472">Membrane</keyword>
<keyword id="KW-0560">Oxidoreductase</keyword>
<keyword id="KW-1185">Reference proteome</keyword>
<keyword id="KW-0812">Transmembrane</keyword>
<keyword id="KW-1133">Transmembrane helix</keyword>
<name>DESD_SYNY3</name>
<dbReference type="EC" id="1.14.19.46" evidence="5 9"/>
<dbReference type="EMBL" id="L11421">
    <property type="protein sequence ID" value="AAA27286.1"/>
    <property type="molecule type" value="Genomic_DNA"/>
</dbReference>
<dbReference type="EMBL" id="BA000022">
    <property type="protein sequence ID" value="BAA18502.1"/>
    <property type="molecule type" value="Genomic_DNA"/>
</dbReference>
<dbReference type="SMR" id="Q08871"/>
<dbReference type="IntAct" id="Q08871">
    <property type="interactions" value="3"/>
</dbReference>
<dbReference type="STRING" id="1148.gene:10499383"/>
<dbReference type="PaxDb" id="1148-1653589"/>
<dbReference type="EnsemblBacteria" id="BAA18502">
    <property type="protein sequence ID" value="BAA18502"/>
    <property type="gene ID" value="BAA18502"/>
</dbReference>
<dbReference type="KEGG" id="syn:sll0262"/>
<dbReference type="eggNOG" id="COG3239">
    <property type="taxonomic scope" value="Bacteria"/>
</dbReference>
<dbReference type="InParanoid" id="Q08871"/>
<dbReference type="PhylomeDB" id="Q08871"/>
<dbReference type="BioCyc" id="MetaCyc:MONOMER-16955"/>
<dbReference type="UniPathway" id="UPA00658"/>
<dbReference type="Proteomes" id="UP000001425">
    <property type="component" value="Chromosome"/>
</dbReference>
<dbReference type="GO" id="GO:0016020">
    <property type="term" value="C:membrane"/>
    <property type="evidence" value="ECO:0007669"/>
    <property type="project" value="UniProtKB-SubCell"/>
</dbReference>
<dbReference type="GO" id="GO:0016213">
    <property type="term" value="F:acyl-CoA 6-desaturase activity"/>
    <property type="evidence" value="ECO:0007669"/>
    <property type="project" value="UniProtKB-EC"/>
</dbReference>
<dbReference type="GO" id="GO:0016717">
    <property type="term" value="F:oxidoreductase activity, acting on paired donors, with oxidation of a pair of donors resulting in the reduction of molecular oxygen to two molecules of water"/>
    <property type="evidence" value="ECO:0000318"/>
    <property type="project" value="GO_Central"/>
</dbReference>
<dbReference type="GO" id="GO:0006629">
    <property type="term" value="P:lipid metabolic process"/>
    <property type="evidence" value="ECO:0000318"/>
    <property type="project" value="GO_Central"/>
</dbReference>
<dbReference type="GO" id="GO:0006636">
    <property type="term" value="P:unsaturated fatty acid biosynthetic process"/>
    <property type="evidence" value="ECO:0007669"/>
    <property type="project" value="UniProtKB-UniPathway"/>
</dbReference>
<dbReference type="CDD" id="cd03506">
    <property type="entry name" value="Delta6-FADS-like"/>
    <property type="match status" value="1"/>
</dbReference>
<dbReference type="InterPro" id="IPR005804">
    <property type="entry name" value="FA_desaturase_dom"/>
</dbReference>
<dbReference type="InterPro" id="IPR012171">
    <property type="entry name" value="Fatty_acid_desaturase"/>
</dbReference>
<dbReference type="PANTHER" id="PTHR19353:SF19">
    <property type="entry name" value="DELTA(5) FATTY ACID DESATURASE C-RELATED"/>
    <property type="match status" value="1"/>
</dbReference>
<dbReference type="PANTHER" id="PTHR19353">
    <property type="entry name" value="FATTY ACID DESATURASE 2"/>
    <property type="match status" value="1"/>
</dbReference>
<dbReference type="Pfam" id="PF00487">
    <property type="entry name" value="FA_desaturase"/>
    <property type="match status" value="1"/>
</dbReference>
<dbReference type="PIRSF" id="PIRSF015921">
    <property type="entry name" value="FA_sphinglp_des"/>
    <property type="match status" value="1"/>
</dbReference>
<reference key="1">
    <citation type="journal article" date="1993" name="Plant Mol. Biol.">
        <title>Isolation of a delta 6-desaturase gene from the cyanobacterium Synechocystis sp. strain PCC 6803 by gain-of-function expression in Anabaena sp. strain PCC 7120.</title>
        <authorList>
            <person name="Reddy A.S."/>
            <person name="Nuccio M.L."/>
            <person name="Gross L.M."/>
            <person name="Thomas T.L."/>
        </authorList>
    </citation>
    <scope>NUCLEOTIDE SEQUENCE [GENOMIC DNA]</scope>
    <scope>FUNCTION</scope>
    <scope>PATHWAY</scope>
    <source>
        <strain>ATCC 27184 / PCC 6803 / N-1</strain>
    </source>
</reference>
<reference key="2">
    <citation type="journal article" date="1996" name="DNA Res.">
        <title>Sequence analysis of the genome of the unicellular cyanobacterium Synechocystis sp. strain PCC6803. II. Sequence determination of the entire genome and assignment of potential protein-coding regions.</title>
        <authorList>
            <person name="Kaneko T."/>
            <person name="Sato S."/>
            <person name="Kotani H."/>
            <person name="Tanaka A."/>
            <person name="Asamizu E."/>
            <person name="Nakamura Y."/>
            <person name="Miyajima N."/>
            <person name="Hirosawa M."/>
            <person name="Sugiura M."/>
            <person name="Sasamoto S."/>
            <person name="Kimura T."/>
            <person name="Hosouchi T."/>
            <person name="Matsuno A."/>
            <person name="Muraki A."/>
            <person name="Nakazaki N."/>
            <person name="Naruo K."/>
            <person name="Okumura S."/>
            <person name="Shimpo S."/>
            <person name="Takeuchi C."/>
            <person name="Wada T."/>
            <person name="Watanabe A."/>
            <person name="Yamada M."/>
            <person name="Yasuda M."/>
            <person name="Tabata S."/>
        </authorList>
    </citation>
    <scope>NUCLEOTIDE SEQUENCE [LARGE SCALE GENOMIC DNA]</scope>
    <source>
        <strain>ATCC 27184 / PCC 6803 / Kazusa</strain>
    </source>
</reference>
<reference key="3">
    <citation type="journal article" date="1996" name="EMBO J.">
        <title>Targeted mutagenesis of acyl-lipid desaturases in Synechocystis: evidence for the important roles of polyunsaturated membrane lipids in growth, respiration and photosynthesis.</title>
        <authorList>
            <person name="Tasaka Y."/>
            <person name="Gombos Z."/>
            <person name="Nishiyama Y."/>
            <person name="Mohanty P."/>
            <person name="Ohba T."/>
            <person name="Ohki K."/>
            <person name="Murata N."/>
        </authorList>
    </citation>
    <scope>FUNCTION</scope>
    <scope>CATALYTIC ACTIVITY</scope>
    <scope>PATHWAY</scope>
    <scope>DISRUPTION PHENOTYPE</scope>
</reference>
<sequence>MLTAERIKFTQKRGFRRVLNQRVDAYFAEHGLTQRDNPSMYLKTLIIVLWLFSAWAFVLFAPVIFPVRLLGCMVLAIALAAFSFNVGHDANHNAYSSNPHINRVLGMTYDFVGLSSFLWRYRHNYLHHTYTNILGHDVEIHGDGAVRMSPEQEHVGIYRFQQFYIWGLYLFIPFYWFLYDVYLVLNKGKYHDHKIPPFQPLELASLLGIKLLWLGYVFGLPLALGFSIPEVLIGASVTYMTYGIVVCTIFMLAHVLESTEFLTPDGESGAIDDEWAICQIRTTANFATNNPFWNWFCGGLNHQVTHHLFPNICHIHYPQLENIIKDVCQEFGVEYKVYPTFKAAIASNYRWLEAMGKAS</sequence>